<accession>P0C337</accession>
<accession>P12132</accession>
<accession>Q32765</accession>
<accession>Q6QXW9</accession>
<accession>Q6QXX8</accession>
<accession>Q6QY32</accession>
<accession>Q6QY41</accession>
<evidence type="ECO:0000255" key="1">
    <source>
        <dbReference type="HAMAP-Rule" id="MF_01358"/>
    </source>
</evidence>
<evidence type="ECO:0000305" key="2"/>
<dbReference type="EC" id="7.1.1.-" evidence="1"/>
<dbReference type="EMBL" id="X15901">
    <property type="protein sequence ID" value="CAA33911.1"/>
    <property type="molecule type" value="Genomic_DNA"/>
</dbReference>
<dbReference type="EMBL" id="X15901">
    <property type="protein sequence ID" value="CAA33949.1"/>
    <property type="molecule type" value="Genomic_DNA"/>
</dbReference>
<dbReference type="EMBL" id="AY522330">
    <property type="protein sequence ID" value="AAS46153.1"/>
    <property type="molecule type" value="Genomic_DNA"/>
</dbReference>
<dbReference type="EMBL" id="AY522330">
    <property type="protein sequence ID" value="AAS46162.1"/>
    <property type="status" value="ALT_INIT"/>
    <property type="molecule type" value="Genomic_DNA"/>
</dbReference>
<dbReference type="PIR" id="JQ0295">
    <property type="entry name" value="DERZ49"/>
</dbReference>
<dbReference type="RefSeq" id="NP_039440.1">
    <property type="nucleotide sequence ID" value="NC_001320.1"/>
</dbReference>
<dbReference type="RefSeq" id="NP_039450.1">
    <property type="nucleotide sequence ID" value="NC_001320.1"/>
</dbReference>
<dbReference type="SMR" id="P0C337"/>
<dbReference type="BioGRID" id="792853">
    <property type="interactions" value="1"/>
</dbReference>
<dbReference type="BioGRID" id="792857">
    <property type="interactions" value="1"/>
</dbReference>
<dbReference type="FunCoup" id="P0C337">
    <property type="interactions" value="11"/>
</dbReference>
<dbReference type="STRING" id="39947.P0C337"/>
<dbReference type="PaxDb" id="39947-P0C337"/>
<dbReference type="GeneID" id="3131489"/>
<dbReference type="KEGG" id="dosa:CAA33911.1"/>
<dbReference type="KEGG" id="dosa:CAA33949.1"/>
<dbReference type="KEGG" id="osa:3131485"/>
<dbReference type="KEGG" id="osa:3131489"/>
<dbReference type="InParanoid" id="P0C337"/>
<dbReference type="OrthoDB" id="722484at2759"/>
<dbReference type="Proteomes" id="UP000059680">
    <property type="component" value="Chloroplast"/>
</dbReference>
<dbReference type="GO" id="GO:0009535">
    <property type="term" value="C:chloroplast thylakoid membrane"/>
    <property type="evidence" value="ECO:0007669"/>
    <property type="project" value="UniProtKB-SubCell"/>
</dbReference>
<dbReference type="GO" id="GO:0009536">
    <property type="term" value="C:plastid"/>
    <property type="evidence" value="ECO:0000305"/>
    <property type="project" value="Gramene"/>
</dbReference>
<dbReference type="GO" id="GO:0051287">
    <property type="term" value="F:NAD binding"/>
    <property type="evidence" value="ECO:0007669"/>
    <property type="project" value="InterPro"/>
</dbReference>
<dbReference type="GO" id="GO:0016655">
    <property type="term" value="F:oxidoreductase activity, acting on NAD(P)H, quinone or similar compound as acceptor"/>
    <property type="evidence" value="ECO:0007669"/>
    <property type="project" value="UniProtKB-UniRule"/>
</dbReference>
<dbReference type="GO" id="GO:0048038">
    <property type="term" value="F:quinone binding"/>
    <property type="evidence" value="ECO:0007669"/>
    <property type="project" value="UniProtKB-KW"/>
</dbReference>
<dbReference type="GO" id="GO:0019684">
    <property type="term" value="P:photosynthesis, light reaction"/>
    <property type="evidence" value="ECO:0007669"/>
    <property type="project" value="UniProtKB-UniRule"/>
</dbReference>
<dbReference type="Gene3D" id="1.10.645.10">
    <property type="entry name" value="Cytochrome-c3 Hydrogenase, chain B"/>
    <property type="match status" value="1"/>
</dbReference>
<dbReference type="HAMAP" id="MF_01358">
    <property type="entry name" value="NDH1_NuoD"/>
    <property type="match status" value="1"/>
</dbReference>
<dbReference type="InterPro" id="IPR001135">
    <property type="entry name" value="NADH_Q_OxRdtase_suD"/>
</dbReference>
<dbReference type="InterPro" id="IPR014029">
    <property type="entry name" value="NADH_UbQ_OxRdtase_49kDa_CS"/>
</dbReference>
<dbReference type="InterPro" id="IPR022885">
    <property type="entry name" value="NDH1_su_D/H"/>
</dbReference>
<dbReference type="InterPro" id="IPR029014">
    <property type="entry name" value="NiFe-Hase_large"/>
</dbReference>
<dbReference type="NCBIfam" id="NF004739">
    <property type="entry name" value="PRK06075.1"/>
    <property type="match status" value="1"/>
</dbReference>
<dbReference type="NCBIfam" id="NF005649">
    <property type="entry name" value="PRK07415.1"/>
    <property type="match status" value="1"/>
</dbReference>
<dbReference type="PANTHER" id="PTHR11993:SF10">
    <property type="entry name" value="NADH DEHYDROGENASE [UBIQUINONE] IRON-SULFUR PROTEIN 2, MITOCHONDRIAL"/>
    <property type="match status" value="1"/>
</dbReference>
<dbReference type="PANTHER" id="PTHR11993">
    <property type="entry name" value="NADH-UBIQUINONE OXIDOREDUCTASE 49 KDA SUBUNIT"/>
    <property type="match status" value="1"/>
</dbReference>
<dbReference type="Pfam" id="PF00346">
    <property type="entry name" value="Complex1_49kDa"/>
    <property type="match status" value="1"/>
</dbReference>
<dbReference type="SUPFAM" id="SSF56762">
    <property type="entry name" value="HydB/Nqo4-like"/>
    <property type="match status" value="1"/>
</dbReference>
<dbReference type="PROSITE" id="PS00535">
    <property type="entry name" value="COMPLEX1_49K"/>
    <property type="match status" value="1"/>
</dbReference>
<gene>
    <name evidence="1" type="primary">ndhH</name>
    <name type="ordered locus">LOC_Osp1g00970</name>
    <name type="ORF">Nip164</name>
    <name type="ORF">Nip176</name>
</gene>
<comment type="function">
    <text evidence="1">NDH shuttles electrons from NAD(P)H:plastoquinone, via FMN and iron-sulfur (Fe-S) centers, to quinones in the photosynthetic chain and possibly in a chloroplast respiratory chain. The immediate electron acceptor for the enzyme in this species is believed to be plastoquinone. Couples the redox reaction to proton translocation, and thus conserves the redox energy in a proton gradient.</text>
</comment>
<comment type="catalytic activity">
    <reaction evidence="1">
        <text>a plastoquinone + NADH + (n+1) H(+)(in) = a plastoquinol + NAD(+) + n H(+)(out)</text>
        <dbReference type="Rhea" id="RHEA:42608"/>
        <dbReference type="Rhea" id="RHEA-COMP:9561"/>
        <dbReference type="Rhea" id="RHEA-COMP:9562"/>
        <dbReference type="ChEBI" id="CHEBI:15378"/>
        <dbReference type="ChEBI" id="CHEBI:17757"/>
        <dbReference type="ChEBI" id="CHEBI:57540"/>
        <dbReference type="ChEBI" id="CHEBI:57945"/>
        <dbReference type="ChEBI" id="CHEBI:62192"/>
    </reaction>
</comment>
<comment type="catalytic activity">
    <reaction evidence="1">
        <text>a plastoquinone + NADPH + (n+1) H(+)(in) = a plastoquinol + NADP(+) + n H(+)(out)</text>
        <dbReference type="Rhea" id="RHEA:42612"/>
        <dbReference type="Rhea" id="RHEA-COMP:9561"/>
        <dbReference type="Rhea" id="RHEA-COMP:9562"/>
        <dbReference type="ChEBI" id="CHEBI:15378"/>
        <dbReference type="ChEBI" id="CHEBI:17757"/>
        <dbReference type="ChEBI" id="CHEBI:57783"/>
        <dbReference type="ChEBI" id="CHEBI:58349"/>
        <dbReference type="ChEBI" id="CHEBI:62192"/>
    </reaction>
</comment>
<comment type="subunit">
    <text evidence="1">NDH is composed of at least 16 different subunits, 5 of which are encoded in the nucleus.</text>
</comment>
<comment type="subcellular location">
    <subcellularLocation>
        <location evidence="1">Plastid</location>
        <location evidence="1">Chloroplast thylakoid membrane</location>
        <topology evidence="1">Peripheral membrane protein</topology>
        <orientation evidence="1">Stromal side</orientation>
    </subcellularLocation>
</comment>
<comment type="miscellaneous">
    <text>There is a 56 residue fragment from the N-terminus in a second position on the plastid genome (corresponds to Nip164); it is not clear if this is transcribed.</text>
</comment>
<comment type="similarity">
    <text evidence="1">Belongs to the complex I 49 kDa subunit family.</text>
</comment>
<comment type="sequence caution" evidence="2">
    <conflict type="erroneous initiation">
        <sequence resource="EMBL-CDS" id="AAS46162"/>
    </conflict>
</comment>
<protein>
    <recommendedName>
        <fullName evidence="1">NAD(P)H-quinone oxidoreductase subunit H, chloroplastic</fullName>
        <ecNumber evidence="1">7.1.1.-</ecNumber>
    </recommendedName>
    <alternativeName>
        <fullName>NAD(P)H dehydrogenase subunit H</fullName>
    </alternativeName>
    <alternativeName>
        <fullName evidence="1">NADH-plastoquinone oxidoreductase 49 kDa subunit</fullName>
    </alternativeName>
    <alternativeName>
        <fullName evidence="1">NADH-plastoquinone oxidoreductase subunit H</fullName>
    </alternativeName>
</protein>
<sequence>MSLPLTRKDLMIVNMGPQHPSMHGVLRLIVTLDGEDVIDCEPILGYLHRGMEKIAENRTIIQYLPYVTRWDYLATMFTEAITVNAPEFLENIQIPQRASYIRVIMLELSRIASHLLWLGPFMADLGAQTPFFYIFRERELIYDLFEAATGMRMMHNYFRIGGVAADLPYGWIDKCLDFCDYFLRGVIEYQQLITQNPIFLERVEGVGFISGEEAVNWGLSGPMLRASGIQWDLRKVDLYESYNQFDWKVQWQKEGDSLARYLVRIGEMRESIKIIQQAVEKIPGGPYENLEVRRFKKAKNSEWNDFEYRFLGKKPSPNFELSKQELYARVEAPKGELGIYLVGDDSLFPWRWKIRPPGFINLQILPQLVKKMKLADIMTILGSIDIIMGEVDR</sequence>
<geneLocation type="chloroplast"/>
<feature type="chain" id="PRO_0000288703" description="NAD(P)H-quinone oxidoreductase subunit H, chloroplastic">
    <location>
        <begin position="1"/>
        <end position="393"/>
    </location>
</feature>
<name>NDHH_ORYSJ</name>
<reference key="1">
    <citation type="journal article" date="1989" name="Mol. Gen. Genet.">
        <title>The complete sequence of the rice (Oryza sativa) chloroplast genome: intermolecular recombination between distinct tRNA genes accounts for a major plastid DNA inversion during the evolution of the cereals.</title>
        <authorList>
            <person name="Hiratsuka J."/>
            <person name="Shimada H."/>
            <person name="Whittier R."/>
            <person name="Ishibashi T."/>
            <person name="Sakamoto M."/>
            <person name="Mori M."/>
            <person name="Kondo C."/>
            <person name="Honji Y."/>
            <person name="Sun C.-R."/>
            <person name="Meng B.-Y."/>
            <person name="Li Y.-Q."/>
            <person name="Kanno A."/>
            <person name="Nishizawa Y."/>
            <person name="Hirai A."/>
            <person name="Shinozaki K."/>
            <person name="Sugiura M."/>
        </authorList>
    </citation>
    <scope>NUCLEOTIDE SEQUENCE [LARGE SCALE GENOMIC DNA]</scope>
    <source>
        <strain>cv. Nipponbare</strain>
    </source>
</reference>
<reference key="2">
    <citation type="journal article" date="2004" name="Plant Physiol.">
        <title>A comparison of rice chloroplast genomes.</title>
        <authorList>
            <person name="Tang J."/>
            <person name="Xia H."/>
            <person name="Cao M."/>
            <person name="Zhang X."/>
            <person name="Zeng W."/>
            <person name="Hu S."/>
            <person name="Tong W."/>
            <person name="Wang J."/>
            <person name="Wang J."/>
            <person name="Yu J."/>
            <person name="Yang H."/>
            <person name="Zhu L."/>
        </authorList>
    </citation>
    <scope>NUCLEOTIDE SEQUENCE [LARGE SCALE GENOMIC DNA]</scope>
    <source>
        <strain>cv. Nipponbare</strain>
    </source>
</reference>
<proteinExistence type="inferred from homology"/>
<keyword id="KW-0150">Chloroplast</keyword>
<keyword id="KW-0472">Membrane</keyword>
<keyword id="KW-0520">NAD</keyword>
<keyword id="KW-0521">NADP</keyword>
<keyword id="KW-0934">Plastid</keyword>
<keyword id="KW-0618">Plastoquinone</keyword>
<keyword id="KW-0874">Quinone</keyword>
<keyword id="KW-1185">Reference proteome</keyword>
<keyword id="KW-0793">Thylakoid</keyword>
<keyword id="KW-1278">Translocase</keyword>
<keyword id="KW-0813">Transport</keyword>
<organism>
    <name type="scientific">Oryza sativa subsp. japonica</name>
    <name type="common">Rice</name>
    <dbReference type="NCBI Taxonomy" id="39947"/>
    <lineage>
        <taxon>Eukaryota</taxon>
        <taxon>Viridiplantae</taxon>
        <taxon>Streptophyta</taxon>
        <taxon>Embryophyta</taxon>
        <taxon>Tracheophyta</taxon>
        <taxon>Spermatophyta</taxon>
        <taxon>Magnoliopsida</taxon>
        <taxon>Liliopsida</taxon>
        <taxon>Poales</taxon>
        <taxon>Poaceae</taxon>
        <taxon>BOP clade</taxon>
        <taxon>Oryzoideae</taxon>
        <taxon>Oryzeae</taxon>
        <taxon>Oryzinae</taxon>
        <taxon>Oryza</taxon>
        <taxon>Oryza sativa</taxon>
    </lineage>
</organism>